<feature type="chain" id="PRO_0000079781" description="D-amino acid oxidase regulator">
    <location>
        <begin position="1"/>
        <end position="153"/>
    </location>
</feature>
<feature type="region of interest" description="Involved in targeting to the mitochondrion" evidence="2">
    <location>
        <begin position="1"/>
        <end position="25"/>
    </location>
</feature>
<feature type="region of interest" description="Interaction with DAO" evidence="6">
    <location>
        <begin position="138"/>
        <end position="153"/>
    </location>
</feature>
<feature type="splice variant" id="VSP_044292" description="In isoform 3." evidence="11 12">
    <location>
        <begin position="1"/>
        <end position="71"/>
    </location>
</feature>
<feature type="splice variant" id="VSP_004053" description="In isoform 2." evidence="13">
    <original>S</original>
    <variation>V</variation>
    <location>
        <position position="16"/>
    </location>
</feature>
<feature type="splice variant" id="VSP_004054" description="In isoform 2." evidence="13">
    <location>
        <begin position="17"/>
        <end position="153"/>
    </location>
</feature>
<feature type="splice variant" id="VSP_044293" description="In isoform 4." evidence="11">
    <original>LEEVSSHVGKVFMARNYEFLAYEASKDRRQPLERMWTCNYNQQKDQSCNHKEITSTKAE</original>
    <variation>HSKVILNGNLHCHFKRISQIFAGHFMEGDTEA</variation>
    <location>
        <begin position="95"/>
        <end position="153"/>
    </location>
</feature>
<feature type="sequence variant" id="VAR_014313" description="Does not affect interaction with DDO; dbSNP:rs2391191." evidence="1 10">
    <original>R</original>
    <variation>K</variation>
    <location>
        <position position="30"/>
    </location>
</feature>
<feature type="sequence variant" id="VAR_050943" description="In dbSNP:rs9558562.">
    <original>K</original>
    <variation>E</variation>
    <location>
        <position position="62"/>
    </location>
</feature>
<evidence type="ECO:0000269" key="1">
    <source>
    </source>
</evidence>
<evidence type="ECO:0000269" key="2">
    <source>
    </source>
</evidence>
<evidence type="ECO:0000269" key="3">
    <source>
    </source>
</evidence>
<evidence type="ECO:0000269" key="4">
    <source>
    </source>
</evidence>
<evidence type="ECO:0000269" key="5">
    <source>
    </source>
</evidence>
<evidence type="ECO:0000269" key="6">
    <source>
    </source>
</evidence>
<evidence type="ECO:0000269" key="7">
    <source>
    </source>
</evidence>
<evidence type="ECO:0000269" key="8">
    <source>
    </source>
</evidence>
<evidence type="ECO:0000269" key="9">
    <source>
    </source>
</evidence>
<evidence type="ECO:0000269" key="10">
    <source>
    </source>
</evidence>
<evidence type="ECO:0000303" key="11">
    <source>
    </source>
</evidence>
<evidence type="ECO:0000303" key="12">
    <source ref="4"/>
</evidence>
<evidence type="ECO:0000305" key="13"/>
<organism>
    <name type="scientific">Homo sapiens</name>
    <name type="common">Human</name>
    <dbReference type="NCBI Taxonomy" id="9606"/>
    <lineage>
        <taxon>Eukaryota</taxon>
        <taxon>Metazoa</taxon>
        <taxon>Chordata</taxon>
        <taxon>Craniata</taxon>
        <taxon>Vertebrata</taxon>
        <taxon>Euteleostomi</taxon>
        <taxon>Mammalia</taxon>
        <taxon>Eutheria</taxon>
        <taxon>Euarchontoglires</taxon>
        <taxon>Primates</taxon>
        <taxon>Haplorrhini</taxon>
        <taxon>Catarrhini</taxon>
        <taxon>Hominidae</taxon>
        <taxon>Homo</taxon>
    </lineage>
</organism>
<gene>
    <name type="primary">DAOA</name>
    <name type="synonym">G72</name>
</gene>
<keyword id="KW-0025">Alternative splicing</keyword>
<keyword id="KW-0963">Cytoplasm</keyword>
<keyword id="KW-0333">Golgi apparatus</keyword>
<keyword id="KW-0496">Mitochondrion</keyword>
<keyword id="KW-1185">Reference proteome</keyword>
<keyword id="KW-1211">Schizophrenia</keyword>
<accession>P59103</accession>
<accession>A6NKG7</accession>
<accession>Q0VAE6</accession>
<accession>Q5VX59</accession>
<accession>Q86Y17</accession>
<accession>Q8IWM4</accession>
<dbReference type="EMBL" id="AE014294">
    <property type="protein sequence ID" value="AAN16027.1"/>
    <property type="molecule type" value="Genomic_DNA"/>
</dbReference>
<dbReference type="EMBL" id="AE014294">
    <property type="protein sequence ID" value="AAN16028.1"/>
    <property type="molecule type" value="Genomic_DNA"/>
</dbReference>
<dbReference type="EMBL" id="AY138546">
    <property type="protein sequence ID" value="AAN08432.1"/>
    <property type="molecule type" value="mRNA"/>
</dbReference>
<dbReference type="EMBL" id="AY138547">
    <property type="protein sequence ID" value="AAN08433.1"/>
    <property type="molecule type" value="mRNA"/>
</dbReference>
<dbReference type="EMBL" id="AY170469">
    <property type="protein sequence ID" value="AAO12727.1"/>
    <property type="molecule type" value="mRNA"/>
</dbReference>
<dbReference type="EMBL" id="AY223901">
    <property type="protein sequence ID" value="AAO73604.1"/>
    <property type="molecule type" value="mRNA"/>
</dbReference>
<dbReference type="EMBL" id="DQ343761">
    <property type="protein sequence ID" value="ABC59904.1"/>
    <property type="molecule type" value="mRNA"/>
</dbReference>
<dbReference type="EMBL" id="DQ357223">
    <property type="protein sequence ID" value="ABC86111.1"/>
    <property type="molecule type" value="mRNA"/>
</dbReference>
<dbReference type="EMBL" id="AL359751">
    <property type="status" value="NOT_ANNOTATED_CDS"/>
    <property type="molecule type" value="Genomic_DNA"/>
</dbReference>
<dbReference type="EMBL" id="CH471085">
    <property type="protein sequence ID" value="EAX09080.1"/>
    <property type="molecule type" value="Genomic_DNA"/>
</dbReference>
<dbReference type="EMBL" id="BC121091">
    <property type="protein sequence ID" value="AAI21092.1"/>
    <property type="molecule type" value="mRNA"/>
</dbReference>
<dbReference type="CCDS" id="CCDS41905.1">
    <molecule id="P59103-1"/>
</dbReference>
<dbReference type="CCDS" id="CCDS53880.1">
    <molecule id="P59103-3"/>
</dbReference>
<dbReference type="CCDS" id="CCDS91834.1">
    <molecule id="P59103-4"/>
</dbReference>
<dbReference type="RefSeq" id="NP_001155284.1">
    <property type="nucleotide sequence ID" value="NM_001161812.1"/>
</dbReference>
<dbReference type="RefSeq" id="NP_001155286.1">
    <molecule id="P59103-3"/>
    <property type="nucleotide sequence ID" value="NM_001161814.1"/>
</dbReference>
<dbReference type="RefSeq" id="NP_001371573.1">
    <molecule id="P59103-4"/>
    <property type="nucleotide sequence ID" value="NM_001384644.1"/>
</dbReference>
<dbReference type="RefSeq" id="NP_001371575.1">
    <molecule id="P59103-3"/>
    <property type="nucleotide sequence ID" value="NM_001384646.1"/>
</dbReference>
<dbReference type="RefSeq" id="NP_758958.3">
    <molecule id="P59103-1"/>
    <property type="nucleotide sequence ID" value="NM_172370.4"/>
</dbReference>
<dbReference type="RefSeq" id="XP_005254099.1">
    <property type="nucleotide sequence ID" value="XM_005254042.1"/>
</dbReference>
<dbReference type="BioGRID" id="129363">
    <property type="interactions" value="5"/>
</dbReference>
<dbReference type="FunCoup" id="P59103">
    <property type="interactions" value="2"/>
</dbReference>
<dbReference type="IntAct" id="P59103">
    <property type="interactions" value="2"/>
</dbReference>
<dbReference type="MINT" id="P59103"/>
<dbReference type="STRING" id="9606.ENSP00000483757"/>
<dbReference type="BioMuta" id="DAOA"/>
<dbReference type="DMDM" id="84028201"/>
<dbReference type="PaxDb" id="9606-ENSP00000483757"/>
<dbReference type="Antibodypedia" id="54191">
    <property type="antibodies" value="80 antibodies from 16 providers"/>
</dbReference>
<dbReference type="DNASU" id="267012"/>
<dbReference type="Ensembl" id="ENST00000329625.9">
    <molecule id="P59103-3"/>
    <property type="protein sequence ID" value="ENSP00000329951.5"/>
    <property type="gene ID" value="ENSG00000182346.22"/>
</dbReference>
<dbReference type="Ensembl" id="ENST00000375936.9">
    <molecule id="P59103-1"/>
    <property type="protein sequence ID" value="ENSP00000365103.3"/>
    <property type="gene ID" value="ENSG00000182346.22"/>
</dbReference>
<dbReference type="Ensembl" id="ENST00000473269.5">
    <molecule id="P59103-4"/>
    <property type="protein sequence ID" value="ENSP00000470244.1"/>
    <property type="gene ID" value="ENSG00000182346.22"/>
</dbReference>
<dbReference type="Ensembl" id="ENST00000559369.5">
    <molecule id="P59103-3"/>
    <property type="protein sequence ID" value="ENSP00000453831.1"/>
    <property type="gene ID" value="ENSG00000182346.22"/>
</dbReference>
<dbReference type="Ensembl" id="ENST00000600388.5">
    <molecule id="P59103-3"/>
    <property type="protein sequence ID" value="ENSP00000472260.1"/>
    <property type="gene ID" value="ENSG00000182346.22"/>
</dbReference>
<dbReference type="Ensembl" id="ENST00000618629.1">
    <molecule id="P59103-1"/>
    <property type="protein sequence ID" value="ENSP00000483757.1"/>
    <property type="gene ID" value="ENSG00000182346.22"/>
</dbReference>
<dbReference type="GeneID" id="267012"/>
<dbReference type="KEGG" id="hsa:267012"/>
<dbReference type="MANE-Select" id="ENST00000375936.9">
    <property type="protein sequence ID" value="ENSP00000365103.3"/>
    <property type="RefSeq nucleotide sequence ID" value="NM_172370.5"/>
    <property type="RefSeq protein sequence ID" value="NP_758958.3"/>
</dbReference>
<dbReference type="UCSC" id="uc001vqb.5">
    <molecule id="P59103-1"/>
    <property type="organism name" value="human"/>
</dbReference>
<dbReference type="AGR" id="HGNC:21191"/>
<dbReference type="CTD" id="267012"/>
<dbReference type="DisGeNET" id="267012"/>
<dbReference type="GeneCards" id="DAOA"/>
<dbReference type="HGNC" id="HGNC:21191">
    <property type="gene designation" value="DAOA"/>
</dbReference>
<dbReference type="HPA" id="ENSG00000182346">
    <property type="expression patterns" value="Not detected"/>
</dbReference>
<dbReference type="MalaCards" id="DAOA"/>
<dbReference type="MIM" id="181500">
    <property type="type" value="phenotype"/>
</dbReference>
<dbReference type="MIM" id="607408">
    <property type="type" value="gene"/>
</dbReference>
<dbReference type="neXtProt" id="NX_P59103"/>
<dbReference type="OpenTargets" id="ENSG00000182346"/>
<dbReference type="PharmGKB" id="PA134924986"/>
<dbReference type="VEuPathDB" id="HostDB:ENSG00000182346"/>
<dbReference type="eggNOG" id="ENOG502T4XP">
    <property type="taxonomic scope" value="Eukaryota"/>
</dbReference>
<dbReference type="GeneTree" id="ENSGT00410000028557"/>
<dbReference type="HOGENOM" id="CLU_2557651_0_0_1"/>
<dbReference type="InParanoid" id="P59103"/>
<dbReference type="OMA" id="QASKDCR"/>
<dbReference type="OrthoDB" id="9526490at2759"/>
<dbReference type="PAN-GO" id="P59103">
    <property type="GO annotations" value="2 GO annotations based on evolutionary models"/>
</dbReference>
<dbReference type="PhylomeDB" id="P59103"/>
<dbReference type="TreeFam" id="TF354179"/>
<dbReference type="PathwayCommons" id="P59103"/>
<dbReference type="SignaLink" id="P59103"/>
<dbReference type="BioGRID-ORCS" id="267012">
    <property type="hits" value="14 hits in 1142 CRISPR screens"/>
</dbReference>
<dbReference type="GenomeRNAi" id="267012"/>
<dbReference type="Pharos" id="P59103">
    <property type="development level" value="Tbio"/>
</dbReference>
<dbReference type="PRO" id="PR:P59103"/>
<dbReference type="Proteomes" id="UP000005640">
    <property type="component" value="Chromosome 13"/>
</dbReference>
<dbReference type="RNAct" id="P59103">
    <property type="molecule type" value="protein"/>
</dbReference>
<dbReference type="Bgee" id="ENSG00000182346">
    <property type="expression patterns" value="Expressed in ganglionic eminence"/>
</dbReference>
<dbReference type="ExpressionAtlas" id="P59103">
    <property type="expression patterns" value="baseline and differential"/>
</dbReference>
<dbReference type="GO" id="GO:0005829">
    <property type="term" value="C:cytosol"/>
    <property type="evidence" value="ECO:0007669"/>
    <property type="project" value="UniProtKB-SubCell"/>
</dbReference>
<dbReference type="GO" id="GO:0005794">
    <property type="term" value="C:Golgi apparatus"/>
    <property type="evidence" value="ECO:0000314"/>
    <property type="project" value="UniProtKB"/>
</dbReference>
<dbReference type="GO" id="GO:0005739">
    <property type="term" value="C:mitochondrion"/>
    <property type="evidence" value="ECO:0000314"/>
    <property type="project" value="UniProtKB"/>
</dbReference>
<dbReference type="GO" id="GO:0048471">
    <property type="term" value="C:perinuclear region of cytoplasm"/>
    <property type="evidence" value="ECO:0000314"/>
    <property type="project" value="UniProtKB"/>
</dbReference>
<dbReference type="GO" id="GO:0046416">
    <property type="term" value="P:D-amino acid metabolic process"/>
    <property type="evidence" value="ECO:0000314"/>
    <property type="project" value="UniProtKB"/>
</dbReference>
<dbReference type="GO" id="GO:0045732">
    <property type="term" value="P:positive regulation of protein catabolic process"/>
    <property type="evidence" value="ECO:0000314"/>
    <property type="project" value="UniProtKB"/>
</dbReference>
<dbReference type="InterPro" id="IPR027929">
    <property type="entry name" value="DAOA"/>
</dbReference>
<dbReference type="Pfam" id="PF15199">
    <property type="entry name" value="DAOA"/>
    <property type="match status" value="1"/>
</dbReference>
<reference key="1">
    <citation type="journal article" date="2002" name="Proc. Natl. Acad. Sci. U.S.A.">
        <title>Genetic and physiological data implicating the new human gene G72 and the gene for D-amino acid oxidase in schizophrenia.</title>
        <authorList>
            <person name="Chumakov I."/>
            <person name="Blumenfeld M."/>
            <person name="Guerassimenko O."/>
            <person name="Cavarec L."/>
            <person name="Palicio M."/>
            <person name="Abderrahim H."/>
            <person name="Bougueleret L."/>
            <person name="Barry C."/>
            <person name="Tanaka H."/>
            <person name="La Rosa P."/>
            <person name="Puech A."/>
            <person name="Tahri N."/>
            <person name="Cohen-Akenine A."/>
            <person name="Delabrosse S."/>
            <person name="Lissarrague S."/>
            <person name="Picard F.-P."/>
            <person name="Maurice K."/>
            <person name="Essioux L."/>
            <person name="Millasseau P."/>
            <person name="Grel P."/>
            <person name="Debailleul V."/>
            <person name="Simon A.-M."/>
            <person name="Caterina D."/>
            <person name="Dufaure I."/>
            <person name="Malekzadeh K."/>
            <person name="Belova M."/>
            <person name="Luan J.-J."/>
            <person name="Bouillot M."/>
            <person name="Sambucy J.-L."/>
            <person name="Primas G."/>
            <person name="Saumier M."/>
            <person name="Boubkiri N."/>
            <person name="Martin-Saumier S."/>
            <person name="Nasroune M."/>
            <person name="Peixoto H."/>
            <person name="Delaye A."/>
            <person name="Pinchot V."/>
            <person name="Bastucci M."/>
            <person name="Guillou S."/>
            <person name="Chevillon M."/>
            <person name="Sainz-Fuertes R."/>
            <person name="Meguenni S."/>
            <person name="Aurich-Costa J."/>
            <person name="Cherif D."/>
            <person name="Gimalac A."/>
            <person name="Van Duijn C."/>
            <person name="Gauvreau D."/>
            <person name="Ouellette G."/>
            <person name="Fortier I."/>
            <person name="Raelson J."/>
            <person name="Sherbatich T."/>
            <person name="Riazanskay N."/>
            <person name="Rogaev E."/>
            <person name="Raeymaekers P."/>
            <person name="Aerssens J."/>
            <person name="Konings F."/>
            <person name="Luyten W."/>
            <person name="Macciardi F."/>
            <person name="Sham P.C."/>
            <person name="Straub R.E."/>
            <person name="Weinberger D.R."/>
            <person name="Cohen N."/>
            <person name="Cohen D."/>
        </authorList>
    </citation>
    <scope>NUCLEOTIDE SEQUENCE [GENOMIC DNA / MRNA] (ISOFORM 1)</scope>
    <scope>VARIANT LYS-30</scope>
    <scope>FUNCTION</scope>
    <scope>ALTERNATIVE SPLICING</scope>
    <scope>INTERACTION WITH DAO</scope>
    <scope>SUBCELLULAR LOCATION</scope>
    <scope>TISSUE SPECIFICITY</scope>
    <scope>INVOLVEMENT IN SCZD</scope>
</reference>
<reference key="2">
    <citation type="journal article" date="2002" name="Proc. Natl. Acad. Sci. U.S.A.">
        <authorList>
            <person name="Chumakov I."/>
            <person name="Blumenfeld M."/>
            <person name="Guerassimenko O."/>
            <person name="Cavarec L."/>
            <person name="Palicio M."/>
            <person name="Abderrahim H."/>
            <person name="Bougueleret L."/>
            <person name="Barry C."/>
            <person name="Tanaka H."/>
            <person name="La Rosa P."/>
            <person name="Puech A."/>
            <person name="Tahri N."/>
            <person name="Cohen-Akenine A."/>
            <person name="Delabrosse S."/>
            <person name="Lissarrague S."/>
            <person name="Picard F.-P."/>
            <person name="Maurice K."/>
            <person name="Essioux L."/>
            <person name="Millasseau P."/>
            <person name="Grel P."/>
            <person name="Debailleul V."/>
            <person name="Simon A.-M."/>
            <person name="Caterina D."/>
            <person name="Dufaure I."/>
            <person name="Malekzadeh K."/>
            <person name="Belova M."/>
            <person name="Luan J.-J."/>
            <person name="Bouillot M."/>
            <person name="Sambucy J.-L."/>
            <person name="Primas G."/>
            <person name="Saumier M."/>
            <person name="Boubkiri N."/>
            <person name="Martin-Saumier S."/>
            <person name="Nasroune M."/>
            <person name="Peixoto H."/>
            <person name="Delaye A."/>
            <person name="Pinchot V."/>
            <person name="Bastucci M."/>
            <person name="Guillou S."/>
            <person name="Chevillon M."/>
            <person name="Sainz-Fuertes R."/>
            <person name="Meguenni S."/>
            <person name="Aurich-Costa J."/>
            <person name="Cherif D."/>
            <person name="Gimalac A."/>
            <person name="Van Duijn C."/>
            <person name="Gauvreau D."/>
            <person name="Ouellette G."/>
            <person name="Fortier I."/>
            <person name="Raelson J."/>
            <person name="Sherbatich T."/>
            <person name="Riazanskay N."/>
            <person name="Rogaev E."/>
            <person name="Raeymaekers P."/>
            <person name="Aerssens J."/>
            <person name="Konings F."/>
            <person name="Luyten W."/>
            <person name="Macciardi F."/>
            <person name="Sham P.C."/>
            <person name="Straub R.E."/>
            <person name="Weinberger D.R."/>
            <person name="Cohen N."/>
            <person name="Cohen D."/>
        </authorList>
    </citation>
    <scope>ERRATUM OF PUBMED:12364586</scope>
</reference>
<reference key="3">
    <citation type="journal article" date="2003" name="Am. J. Hum. Genet.">
        <title>Polymorphisms at the G72/G30 gene locus, on 13q33, are associated with bipolar disorder in two independent pedigree series.</title>
        <authorList>
            <person name="Hattori E."/>
            <person name="Liu C."/>
            <person name="Badner J.A."/>
            <person name="Bonner T.I."/>
            <person name="Christian S.L."/>
            <person name="Maheshwari M."/>
            <person name="Detera-Wadleigh S.D."/>
            <person name="Gibbs R.A."/>
            <person name="Gershon E.S."/>
        </authorList>
    </citation>
    <scope>NUCLEOTIDE SEQUENCE [MRNA] (ISOFORMS 3 AND 4)</scope>
    <source>
        <tissue>Brain</tissue>
        <tissue>Testis</tissue>
    </source>
</reference>
<reference key="4">
    <citation type="submission" date="2005-12" db="EMBL/GenBank/DDBJ databases">
        <title>Expression profile of G72 gene in human brain and G72 transgenic mice brain.</title>
        <authorList>
            <person name="Cheng L."/>
            <person name="Gershon E.S."/>
            <person name="Liu C."/>
        </authorList>
    </citation>
    <scope>NUCLEOTIDE SEQUENCE [MRNA] (ISOFORM 3)</scope>
    <source>
        <tissue>Amygdala</tissue>
    </source>
</reference>
<reference key="5">
    <citation type="journal article" date="2004" name="Nature">
        <title>The DNA sequence and analysis of human chromosome 13.</title>
        <authorList>
            <person name="Dunham A."/>
            <person name="Matthews L.H."/>
            <person name="Burton J."/>
            <person name="Ashurst J.L."/>
            <person name="Howe K.L."/>
            <person name="Ashcroft K.J."/>
            <person name="Beare D.M."/>
            <person name="Burford D.C."/>
            <person name="Hunt S.E."/>
            <person name="Griffiths-Jones S."/>
            <person name="Jones M.C."/>
            <person name="Keenan S.J."/>
            <person name="Oliver K."/>
            <person name="Scott C.E."/>
            <person name="Ainscough R."/>
            <person name="Almeida J.P."/>
            <person name="Ambrose K.D."/>
            <person name="Andrews D.T."/>
            <person name="Ashwell R.I.S."/>
            <person name="Babbage A.K."/>
            <person name="Bagguley C.L."/>
            <person name="Bailey J."/>
            <person name="Bannerjee R."/>
            <person name="Barlow K.F."/>
            <person name="Bates K."/>
            <person name="Beasley H."/>
            <person name="Bird C.P."/>
            <person name="Bray-Allen S."/>
            <person name="Brown A.J."/>
            <person name="Brown J.Y."/>
            <person name="Burrill W."/>
            <person name="Carder C."/>
            <person name="Carter N.P."/>
            <person name="Chapman J.C."/>
            <person name="Clamp M.E."/>
            <person name="Clark S.Y."/>
            <person name="Clarke G."/>
            <person name="Clee C.M."/>
            <person name="Clegg S.C."/>
            <person name="Cobley V."/>
            <person name="Collins J.E."/>
            <person name="Corby N."/>
            <person name="Coville G.J."/>
            <person name="Deloukas P."/>
            <person name="Dhami P."/>
            <person name="Dunham I."/>
            <person name="Dunn M."/>
            <person name="Earthrowl M.E."/>
            <person name="Ellington A.G."/>
            <person name="Faulkner L."/>
            <person name="Frankish A.G."/>
            <person name="Frankland J."/>
            <person name="French L."/>
            <person name="Garner P."/>
            <person name="Garnett J."/>
            <person name="Gilbert J.G.R."/>
            <person name="Gilson C.J."/>
            <person name="Ghori J."/>
            <person name="Grafham D.V."/>
            <person name="Gribble S.M."/>
            <person name="Griffiths C."/>
            <person name="Hall R.E."/>
            <person name="Hammond S."/>
            <person name="Harley J.L."/>
            <person name="Hart E.A."/>
            <person name="Heath P.D."/>
            <person name="Howden P.J."/>
            <person name="Huckle E.J."/>
            <person name="Hunt P.J."/>
            <person name="Hunt A.R."/>
            <person name="Johnson C."/>
            <person name="Johnson D."/>
            <person name="Kay M."/>
            <person name="Kimberley A.M."/>
            <person name="King A."/>
            <person name="Laird G.K."/>
            <person name="Langford C.J."/>
            <person name="Lawlor S."/>
            <person name="Leongamornlert D.A."/>
            <person name="Lloyd D.M."/>
            <person name="Lloyd C."/>
            <person name="Loveland J.E."/>
            <person name="Lovell J."/>
            <person name="Martin S."/>
            <person name="Mashreghi-Mohammadi M."/>
            <person name="McLaren S.J."/>
            <person name="McMurray A."/>
            <person name="Milne S."/>
            <person name="Moore M.J.F."/>
            <person name="Nickerson T."/>
            <person name="Palmer S.A."/>
            <person name="Pearce A.V."/>
            <person name="Peck A.I."/>
            <person name="Pelan S."/>
            <person name="Phillimore B."/>
            <person name="Porter K.M."/>
            <person name="Rice C.M."/>
            <person name="Searle S."/>
            <person name="Sehra H.K."/>
            <person name="Shownkeen R."/>
            <person name="Skuce C.D."/>
            <person name="Smith M."/>
            <person name="Steward C.A."/>
            <person name="Sycamore N."/>
            <person name="Tester J."/>
            <person name="Thomas D.W."/>
            <person name="Tracey A."/>
            <person name="Tromans A."/>
            <person name="Tubby B."/>
            <person name="Wall M."/>
            <person name="Wallis J.M."/>
            <person name="West A.P."/>
            <person name="Whitehead S.L."/>
            <person name="Willey D.L."/>
            <person name="Wilming L."/>
            <person name="Wray P.W."/>
            <person name="Wright M.W."/>
            <person name="Young L."/>
            <person name="Coulson A."/>
            <person name="Durbin R.M."/>
            <person name="Hubbard T."/>
            <person name="Sulston J.E."/>
            <person name="Beck S."/>
            <person name="Bentley D.R."/>
            <person name="Rogers J."/>
            <person name="Ross M.T."/>
        </authorList>
    </citation>
    <scope>NUCLEOTIDE SEQUENCE [LARGE SCALE GENOMIC DNA]</scope>
</reference>
<reference key="6">
    <citation type="submission" date="2005-07" db="EMBL/GenBank/DDBJ databases">
        <authorList>
            <person name="Mural R.J."/>
            <person name="Istrail S."/>
            <person name="Sutton G."/>
            <person name="Florea L."/>
            <person name="Halpern A.L."/>
            <person name="Mobarry C.M."/>
            <person name="Lippert R."/>
            <person name="Walenz B."/>
            <person name="Shatkay H."/>
            <person name="Dew I."/>
            <person name="Miller J.R."/>
            <person name="Flanigan M.J."/>
            <person name="Edwards N.J."/>
            <person name="Bolanos R."/>
            <person name="Fasulo D."/>
            <person name="Halldorsson B.V."/>
            <person name="Hannenhalli S."/>
            <person name="Turner R."/>
            <person name="Yooseph S."/>
            <person name="Lu F."/>
            <person name="Nusskern D.R."/>
            <person name="Shue B.C."/>
            <person name="Zheng X.H."/>
            <person name="Zhong F."/>
            <person name="Delcher A.L."/>
            <person name="Huson D.H."/>
            <person name="Kravitz S.A."/>
            <person name="Mouchard L."/>
            <person name="Reinert K."/>
            <person name="Remington K.A."/>
            <person name="Clark A.G."/>
            <person name="Waterman M.S."/>
            <person name="Eichler E.E."/>
            <person name="Adams M.D."/>
            <person name="Hunkapiller M.W."/>
            <person name="Myers E.W."/>
            <person name="Venter J.C."/>
        </authorList>
    </citation>
    <scope>NUCLEOTIDE SEQUENCE [LARGE SCALE GENOMIC DNA]</scope>
</reference>
<reference key="7">
    <citation type="journal article" date="2004" name="Genome Res.">
        <title>The status, quality, and expansion of the NIH full-length cDNA project: the Mammalian Gene Collection (MGC).</title>
        <authorList>
            <consortium name="The MGC Project Team"/>
        </authorList>
    </citation>
    <scope>NUCLEOTIDE SEQUENCE [LARGE SCALE MRNA] (ISOFORM 1)</scope>
</reference>
<reference key="8">
    <citation type="journal article" date="2004" name="Genome Biol.">
        <title>An unappreciated role for RNA surveillance.</title>
        <authorList>
            <person name="Hillman R.T."/>
            <person name="Green R.E."/>
            <person name="Brenner S.E."/>
        </authorList>
    </citation>
    <scope>SPLICE ISOFORM(S) THAT ARE POTENTIAL NMD TARGET(S)</scope>
</reference>
<reference key="9">
    <citation type="journal article" date="2008" name="J. Biol. Chem.">
        <title>pLG72 modulates intracellular D-serine levels through its interaction with D-amino acid oxidase: effect on schizophrenia susceptibility.</title>
        <authorList>
            <person name="Sacchi S."/>
            <person name="Bernasconi M."/>
            <person name="Martineau M."/>
            <person name="Mothet J.P."/>
            <person name="Ruzzene M."/>
            <person name="Pilone M.S."/>
            <person name="Pollegioni L."/>
            <person name="Molla G."/>
        </authorList>
    </citation>
    <scope>FUNCTION</scope>
    <scope>INTERACTION WITH DAO</scope>
    <scope>SUBCELLULAR LOCATION</scope>
    <scope>TISSUE SPECIFICITY</scope>
</reference>
<reference key="10">
    <citation type="journal article" date="2008" name="Mol. Psychiatry">
        <title>Evidence implicating the candidate schizophrenia/bipolar disorder susceptibility gene G72 in mitochondrial function.</title>
        <authorList>
            <person name="Kvajo M."/>
            <person name="Dhilla A."/>
            <person name="Swor D.E."/>
            <person name="Karayiorgou M."/>
            <person name="Gogos J.A."/>
        </authorList>
    </citation>
    <scope>FUNCTION</scope>
    <scope>SUBCELLULAR LOCATION</scope>
    <scope>TISSUE SPECIFICITY</scope>
</reference>
<reference key="11">
    <citation type="journal article" date="2010" name="Protein Sci.">
        <title>Effect of ligand binding on human D-amino acid oxidase: implications for the development of new drugs for schizophrenia treatment.</title>
        <authorList>
            <person name="Caldinelli L."/>
            <person name="Molla G."/>
            <person name="Bracci L."/>
            <person name="Lelli B."/>
            <person name="Pileri S."/>
            <person name="Cappelletti P."/>
            <person name="Sacchi S."/>
            <person name="Pollegioni L."/>
        </authorList>
    </citation>
    <scope>FUNCTION</scope>
    <scope>INTERACTION WITH DAO</scope>
</reference>
<reference key="12">
    <citation type="journal article" date="2011" name="Mol. Cell. Neurosci.">
        <title>Evidence for the interaction of D-amino acid oxidase with pLG72 in a glial cell line.</title>
        <authorList>
            <person name="Sacchi S."/>
            <person name="Cappelletti P."/>
            <person name="Giovannardi S."/>
            <person name="Pollegioni L."/>
        </authorList>
    </citation>
    <scope>FUNCTION</scope>
    <scope>INTERACTION WITH DAO</scope>
</reference>
<reference key="13">
    <citation type="journal article" date="2013" name="Int. J. Mol. Sci.">
        <title>The C-terminal region of G72 increases D-amino acid oxidase activity.</title>
        <authorList>
            <person name="Chang S.L."/>
            <person name="Hsieh C.H."/>
            <person name="Chen Y.J."/>
            <person name="Wang C.M."/>
            <person name="Shih C.S."/>
            <person name="Huang P.W."/>
            <person name="Mir A."/>
            <person name="Lane H.Y."/>
            <person name="Tsai G.E."/>
            <person name="Chang H.T."/>
        </authorList>
    </citation>
    <scope>FUNCTION</scope>
    <scope>INTERACTION WITH DAO</scope>
</reference>
<reference key="14">
    <citation type="journal article" date="2014" name="Cell. Mol. Neurobiol.">
        <title>Identification of the mitochondrial MSRB2 as a binding partner of LG72.</title>
        <authorList>
            <person name="Otte D.M."/>
            <person name="Rasko T."/>
            <person name="Wang M."/>
            <person name="Dreiseidler M."/>
            <person name="Drews E."/>
            <person name="Schrage H."/>
            <person name="Wojtalla A."/>
            <person name="Hoehfeld J."/>
            <person name="Wanker E."/>
            <person name="Zimmer A."/>
        </authorList>
    </citation>
    <scope>INTERACTION WITH MSRB2</scope>
    <scope>SUBCELLULAR LOCATION</scope>
</reference>
<reference key="15">
    <citation type="journal article" date="2017" name="Front. Mol. Neurosci.">
        <title>Controversial Effects of D-Amino Acid Oxidase Activator (DAOA)/G72 on D-Amino Acid Oxidase (DAO) Activity in Human Neuronal, Astrocyte and Kidney Cell Lines: The N-methyl D-aspartate (NMDA) Receptor Hypofunction Point of View.</title>
        <authorList>
            <person name="Jagannath V."/>
            <person name="Brotzakis Z.F."/>
            <person name="Parrinello M."/>
            <person name="Walitza S."/>
            <person name="Gruenblatt E."/>
        </authorList>
    </citation>
    <scope>FUNCTION</scope>
</reference>
<reference key="16">
    <citation type="journal article" date="2018" name="Free Radic. Res.">
        <title>pLG72 induces superoxide radicals via interaction and aggregation with SOD1.</title>
        <authorList>
            <person name="Wang M."/>
            <person name="Saw H.P."/>
            <person name="Cui F.F."/>
            <person name="Lin S.Y."/>
            <person name="Chang H.T."/>
            <person name="Chiu C.D."/>
        </authorList>
    </citation>
    <scope>FUNCTION</scope>
    <scope>INTERACTION WITH SOD1</scope>
</reference>
<reference key="17">
    <citation type="journal article" date="2023" name="Protein Sci.">
        <title>On the regulation of human D-aspartate oxidase.</title>
        <authorList>
            <person name="Rabattoni V."/>
            <person name="Motta Z."/>
            <person name="Miceli M."/>
            <person name="Molla G."/>
            <person name="Fissore A."/>
            <person name="Adinolfi S."/>
            <person name="Pollegioni L."/>
            <person name="Sacchi S."/>
        </authorList>
    </citation>
    <scope>CHARACTERIZATION OF VARIANT LYS-30</scope>
    <scope>FUNCTION</scope>
    <scope>INTERACTION WITH DDO</scope>
</reference>
<proteinExistence type="evidence at protein level"/>
<protein>
    <recommendedName>
        <fullName>D-amino acid oxidase regulator</fullName>
    </recommendedName>
    <alternativeName>
        <fullName>Protein G72</fullName>
    </alternativeName>
</protein>
<sequence>MLEKLMGADSLQLFRSRYTLGKIYFIGFQRSILLSKSENSLNSIAKETEEGRETVTRKEGWKRRHEDGYLEMAQRHLQRSLCPWVSYLPQPYAELEEVSSHVGKVFMARNYEFLAYEASKDRRQPLERMWTCNYNQQKDQSCNHKEITSTKAE</sequence>
<name>DAOA_HUMAN</name>
<comment type="function">
    <text evidence="1 2 3 4 5 6 8 9 10">May suppress DAO (D-amino acid oxidase) and SOD1 activity and promote their degradation (PubMed:18544534, PubMed:20521334, PubMed:21679769, PubMed:30037290). Has conversely also been suggested to function as a DAO activator (PubMed:12364586, PubMed:24362575, PubMed:29114206). May stimulate the degradation of DDO (D-aspartate oxidase) (PubMed:37805834). May play a role in mitochondrial fission (PubMed:17684499).</text>
</comment>
<comment type="subunit">
    <text evidence="1 3 4 5 6 7 9 10">Interacts with DAO (D-amino acid oxidase); the interaction is direct, can occur in the presence or absence of FAD or substrate bound to DAO, and results in a complex containing two DAO homodimers and two DAOA monomers (PubMed:12364586, PubMed:18544534, PubMed:20521334, PubMed:21679769, PubMed:24362575). Interacts with DDO (D-aspartate oxidase); the interaction is direct (PubMed:37805834). Interacts wih SOD1; the interaction is direct (PubMed:30037290). Interacts with MSRB2; the interaction is direct (PubMed:25078755).</text>
</comment>
<comment type="subcellular location">
    <subcellularLocation>
        <location evidence="3">Cytoplasm</location>
        <location evidence="3">Cytosol</location>
    </subcellularLocation>
    <subcellularLocation>
        <location evidence="1 3">Golgi apparatus</location>
    </subcellularLocation>
    <subcellularLocation>
        <location evidence="2 7">Mitochondrion</location>
    </subcellularLocation>
    <text evidence="3">May transiently pass through the Golgi apparatus.</text>
</comment>
<comment type="alternative products">
    <event type="alternative splicing"/>
    <isoform>
        <id>P59103-1</id>
        <name>1</name>
        <name>LG72</name>
        <sequence type="displayed"/>
    </isoform>
    <isoform>
        <id>P59103-2</id>
        <name>2</name>
        <name>SG72</name>
        <sequence type="described" ref="VSP_004053 VSP_004054"/>
    </isoform>
    <isoform>
        <id>P59103-3</id>
        <name>3</name>
        <sequence type="described" ref="VSP_044292"/>
    </isoform>
    <isoform>
        <id>P59103-4</id>
        <name>4</name>
        <sequence type="described" ref="VSP_044293"/>
    </isoform>
</comment>
<comment type="tissue specificity">
    <text evidence="1 2 3">Expressed in the amygdala and in astrocytes of the cortex (at protein level) (PubMed:12364586, PubMed:17684499, PubMed:18544534). Expressed in the caudate nucleus, spinal cord and testis (PubMed:12364586).</text>
</comment>
<comment type="disease" evidence="1">
    <disease id="DI-03626">
        <name>Schizophrenia</name>
        <acronym>SCZD</acronym>
        <description>A complex, multifactorial psychotic disorder or group of disorders characterized by disturbances in the form and content of thought (e.g. delusions, hallucinations), in mood (e.g. inappropriate affect), in sense of self and relationship to the external world (e.g. loss of ego boundaries, withdrawal), and in behavior (e.g bizarre or apparently purposeless behavior). Although it affects emotions, it is distinguished from mood disorders in which such disturbances are primary. Similarly, there may be mild impairment of cognitive function, and it is distinguished from the dementias in which disturbed cognitive function is considered primary. Some patients manifest schizophrenic as well as bipolar disorder symptoms and are often given the diagnosis of schizoaffective disorder.</description>
        <dbReference type="MIM" id="181500"/>
    </disease>
    <text>Disease susceptibility may be associated with variants affecting the gene represented in this entry.</text>
</comment>
<comment type="miscellaneous">
    <molecule>Isoform 1</molecule>
    <text>May be produced at very low levels due to a premature stop codon in the mRNA, leading to nonsense-mediated mRNA decay.</text>
</comment>
<comment type="miscellaneous">
    <molecule>Isoform 2</molecule>
    <text evidence="13">May be produced at very low levels due to a premature stop codon in the mRNA, leading to nonsense-mediated mRNA decay.</text>
</comment>
<comment type="caution">
    <text evidence="1 2 3 5 6 7 8">PubMed:12364586, PubMed:24362575, and PubMed:29114206 show that DAOA activates DAO, however the results could not be reproduced by PubMed:18544534. Instead, PubMed:18544534 found that it acts as a repressor of DAO. Conversely, PubMed:17684499 reported that DAOA does not activate, interact, or colocalize with DAO, whereas PubMed:21679769 suggested that they may colocalize prior to the peroxisomal import of DAO. The mitochondrial activity is also disputed with PubMed:18544534 reporting its absence and PubMed:17684499 and PubMed:25078755 its presence in the mitochondrion.</text>
</comment>